<evidence type="ECO:0000255" key="1">
    <source>
        <dbReference type="HAMAP-Rule" id="MF_00019"/>
    </source>
</evidence>
<keyword id="KW-0963">Cytoplasm</keyword>
<keyword id="KW-0444">Lipid biosynthesis</keyword>
<keyword id="KW-0443">Lipid metabolism</keyword>
<keyword id="KW-0594">Phospholipid biosynthesis</keyword>
<keyword id="KW-1208">Phospholipid metabolism</keyword>
<keyword id="KW-1185">Reference proteome</keyword>
<keyword id="KW-0808">Transferase</keyword>
<name>PLSX_FRATT</name>
<reference key="1">
    <citation type="journal article" date="2005" name="Nat. Genet.">
        <title>The complete genome sequence of Francisella tularensis, the causative agent of tularemia.</title>
        <authorList>
            <person name="Larsson P."/>
            <person name="Oyston P.C.F."/>
            <person name="Chain P."/>
            <person name="Chu M.C."/>
            <person name="Duffield M."/>
            <person name="Fuxelius H.-H."/>
            <person name="Garcia E."/>
            <person name="Haelltorp G."/>
            <person name="Johansson D."/>
            <person name="Isherwood K.E."/>
            <person name="Karp P.D."/>
            <person name="Larsson E."/>
            <person name="Liu Y."/>
            <person name="Michell S."/>
            <person name="Prior J."/>
            <person name="Prior R."/>
            <person name="Malfatti S."/>
            <person name="Sjoestedt A."/>
            <person name="Svensson K."/>
            <person name="Thompson N."/>
            <person name="Vergez L."/>
            <person name="Wagg J.K."/>
            <person name="Wren B.W."/>
            <person name="Lindler L.E."/>
            <person name="Andersson S.G.E."/>
            <person name="Forsman M."/>
            <person name="Titball R.W."/>
        </authorList>
    </citation>
    <scope>NUCLEOTIDE SEQUENCE [LARGE SCALE GENOMIC DNA]</scope>
    <source>
        <strain>SCHU S4 / Schu 4</strain>
    </source>
</reference>
<feature type="chain" id="PRO_0000189880" description="Phosphate acyltransferase">
    <location>
        <begin position="1"/>
        <end position="348"/>
    </location>
</feature>
<proteinExistence type="inferred from homology"/>
<protein>
    <recommendedName>
        <fullName evidence="1">Phosphate acyltransferase</fullName>
        <ecNumber evidence="1">2.3.1.274</ecNumber>
    </recommendedName>
    <alternativeName>
        <fullName evidence="1">Acyl-ACP phosphotransacylase</fullName>
    </alternativeName>
    <alternativeName>
        <fullName evidence="1">Acyl-[acyl-carrier-protein]--phosphate acyltransferase</fullName>
    </alternativeName>
    <alternativeName>
        <fullName evidence="1">Phosphate-acyl-ACP acyltransferase</fullName>
    </alternativeName>
</protein>
<sequence>MGYKISIDAMGGDHGLNTTIPAALEAVKKDSNLQIVLVGDHHKIKRALDRYSKVKKIKLPVLQRIAIHHASETVGMDESPSIAVRKKKDSSMRVAINLVKDRTVDACVSAGNTGALMATSKFVLKTINGVDRPAIVYALPAFNRETKQLSKTYMLDLGANVVCTSEQLFQFAIMGSILAASSKGIAEPRVSLLNIGEEEMKGLDNIKNAAKLLQGCDFINYNGYIEGKYIFDDTTDVIVCDGFVGNVSLKTMEGSLRLIESLIKKTIQESSLLMKIPIVMALPIFKKMKKGMNLDSFNGASLLGLTGIVVKSHGGASANAFETAIYEAIKEIKYNIPKTIQESLEKVL</sequence>
<organism>
    <name type="scientific">Francisella tularensis subsp. tularensis (strain SCHU S4 / Schu 4)</name>
    <dbReference type="NCBI Taxonomy" id="177416"/>
    <lineage>
        <taxon>Bacteria</taxon>
        <taxon>Pseudomonadati</taxon>
        <taxon>Pseudomonadota</taxon>
        <taxon>Gammaproteobacteria</taxon>
        <taxon>Thiotrichales</taxon>
        <taxon>Francisellaceae</taxon>
        <taxon>Francisella</taxon>
    </lineage>
</organism>
<gene>
    <name evidence="1" type="primary">plsX</name>
    <name type="ordered locus">FTT_1372</name>
</gene>
<dbReference type="EC" id="2.3.1.274" evidence="1"/>
<dbReference type="EMBL" id="AJ749949">
    <property type="protein sequence ID" value="CAG46005.1"/>
    <property type="molecule type" value="Genomic_DNA"/>
</dbReference>
<dbReference type="RefSeq" id="WP_003016130.1">
    <property type="nucleotide sequence ID" value="NZ_CP010290.1"/>
</dbReference>
<dbReference type="RefSeq" id="YP_170321.1">
    <property type="nucleotide sequence ID" value="NC_006570.2"/>
</dbReference>
<dbReference type="SMR" id="Q5NF71"/>
<dbReference type="STRING" id="177416.FTT_1372"/>
<dbReference type="DNASU" id="3191914"/>
<dbReference type="EnsemblBacteria" id="CAG46005">
    <property type="protein sequence ID" value="CAG46005"/>
    <property type="gene ID" value="FTT_1372"/>
</dbReference>
<dbReference type="KEGG" id="ftu:FTT_1372"/>
<dbReference type="eggNOG" id="COG0416">
    <property type="taxonomic scope" value="Bacteria"/>
</dbReference>
<dbReference type="OrthoDB" id="9806408at2"/>
<dbReference type="UniPathway" id="UPA00085"/>
<dbReference type="Proteomes" id="UP000001174">
    <property type="component" value="Chromosome"/>
</dbReference>
<dbReference type="GO" id="GO:0005737">
    <property type="term" value="C:cytoplasm"/>
    <property type="evidence" value="ECO:0007669"/>
    <property type="project" value="UniProtKB-SubCell"/>
</dbReference>
<dbReference type="GO" id="GO:0043811">
    <property type="term" value="F:phosphate:acyl-[acyl carrier protein] acyltransferase activity"/>
    <property type="evidence" value="ECO:0007669"/>
    <property type="project" value="UniProtKB-UniRule"/>
</dbReference>
<dbReference type="GO" id="GO:0006633">
    <property type="term" value="P:fatty acid biosynthetic process"/>
    <property type="evidence" value="ECO:0007669"/>
    <property type="project" value="UniProtKB-UniRule"/>
</dbReference>
<dbReference type="GO" id="GO:0008654">
    <property type="term" value="P:phospholipid biosynthetic process"/>
    <property type="evidence" value="ECO:0007669"/>
    <property type="project" value="UniProtKB-KW"/>
</dbReference>
<dbReference type="Gene3D" id="3.40.718.10">
    <property type="entry name" value="Isopropylmalate Dehydrogenase"/>
    <property type="match status" value="1"/>
</dbReference>
<dbReference type="HAMAP" id="MF_00019">
    <property type="entry name" value="PlsX"/>
    <property type="match status" value="1"/>
</dbReference>
<dbReference type="InterPro" id="IPR003664">
    <property type="entry name" value="FA_synthesis"/>
</dbReference>
<dbReference type="InterPro" id="IPR012281">
    <property type="entry name" value="Phospholipid_synth_PlsX-like"/>
</dbReference>
<dbReference type="NCBIfam" id="TIGR00182">
    <property type="entry name" value="plsX"/>
    <property type="match status" value="1"/>
</dbReference>
<dbReference type="PANTHER" id="PTHR30100">
    <property type="entry name" value="FATTY ACID/PHOSPHOLIPID SYNTHESIS PROTEIN PLSX"/>
    <property type="match status" value="1"/>
</dbReference>
<dbReference type="PANTHER" id="PTHR30100:SF1">
    <property type="entry name" value="PHOSPHATE ACYLTRANSFERASE"/>
    <property type="match status" value="1"/>
</dbReference>
<dbReference type="Pfam" id="PF02504">
    <property type="entry name" value="FA_synthesis"/>
    <property type="match status" value="1"/>
</dbReference>
<dbReference type="PIRSF" id="PIRSF002465">
    <property type="entry name" value="Phsphlp_syn_PlsX"/>
    <property type="match status" value="1"/>
</dbReference>
<dbReference type="SUPFAM" id="SSF53659">
    <property type="entry name" value="Isocitrate/Isopropylmalate dehydrogenase-like"/>
    <property type="match status" value="1"/>
</dbReference>
<comment type="function">
    <text evidence="1">Catalyzes the reversible formation of acyl-phosphate (acyl-PO(4)) from acyl-[acyl-carrier-protein] (acyl-ACP). This enzyme utilizes acyl-ACP as fatty acyl donor, but not acyl-CoA.</text>
</comment>
<comment type="catalytic activity">
    <reaction evidence="1">
        <text>a fatty acyl-[ACP] + phosphate = an acyl phosphate + holo-[ACP]</text>
        <dbReference type="Rhea" id="RHEA:42292"/>
        <dbReference type="Rhea" id="RHEA-COMP:9685"/>
        <dbReference type="Rhea" id="RHEA-COMP:14125"/>
        <dbReference type="ChEBI" id="CHEBI:43474"/>
        <dbReference type="ChEBI" id="CHEBI:59918"/>
        <dbReference type="ChEBI" id="CHEBI:64479"/>
        <dbReference type="ChEBI" id="CHEBI:138651"/>
        <dbReference type="EC" id="2.3.1.274"/>
    </reaction>
</comment>
<comment type="pathway">
    <text evidence="1">Lipid metabolism; phospholipid metabolism.</text>
</comment>
<comment type="subunit">
    <text evidence="1">Homodimer. Probably interacts with PlsY.</text>
</comment>
<comment type="subcellular location">
    <subcellularLocation>
        <location evidence="1">Cytoplasm</location>
    </subcellularLocation>
    <text evidence="1">Associated with the membrane possibly through PlsY.</text>
</comment>
<comment type="similarity">
    <text evidence="1">Belongs to the PlsX family.</text>
</comment>
<accession>Q5NF71</accession>